<accession>Q8BGE6</accession>
<accession>Q6ZQ22</accession>
<accession>Q8R098</accession>
<reference key="1">
    <citation type="journal article" date="2003" name="J. Biol. Chem.">
        <title>Human autophagins, a family of cysteine proteinases potentially implicated in cell degradation by autophagy.</title>
        <authorList>
            <person name="Marino G."/>
            <person name="Uria J.A."/>
            <person name="Puente X.S."/>
            <person name="Quesada V."/>
            <person name="Bordallo J."/>
            <person name="Lopez-Otin C."/>
        </authorList>
    </citation>
    <scope>NUCLEOTIDE SEQUENCE [MRNA]</scope>
    <scope>RETRACTED PAPER</scope>
    <source>
        <strain>BALB/cJ</strain>
    </source>
</reference>
<reference key="2">
    <citation type="journal article" date="2019" name="J. Biol. Chem.">
        <authorList>
            <person name="Marino G."/>
            <person name="Uria J.A."/>
            <person name="Puente X.S."/>
            <person name="Quesada V."/>
            <person name="Bordallo J."/>
            <person name="Lopez-Otin C."/>
        </authorList>
    </citation>
    <scope>RETRACTION NOTICE OF PUBMED:12446702</scope>
</reference>
<reference key="3">
    <citation type="journal article" date="2005" name="Science">
        <title>The transcriptional landscape of the mammalian genome.</title>
        <authorList>
            <person name="Carninci P."/>
            <person name="Kasukawa T."/>
            <person name="Katayama S."/>
            <person name="Gough J."/>
            <person name="Frith M.C."/>
            <person name="Maeda N."/>
            <person name="Oyama R."/>
            <person name="Ravasi T."/>
            <person name="Lenhard B."/>
            <person name="Wells C."/>
            <person name="Kodzius R."/>
            <person name="Shimokawa K."/>
            <person name="Bajic V.B."/>
            <person name="Brenner S.E."/>
            <person name="Batalov S."/>
            <person name="Forrest A.R."/>
            <person name="Zavolan M."/>
            <person name="Davis M.J."/>
            <person name="Wilming L.G."/>
            <person name="Aidinis V."/>
            <person name="Allen J.E."/>
            <person name="Ambesi-Impiombato A."/>
            <person name="Apweiler R."/>
            <person name="Aturaliya R.N."/>
            <person name="Bailey T.L."/>
            <person name="Bansal M."/>
            <person name="Baxter L."/>
            <person name="Beisel K.W."/>
            <person name="Bersano T."/>
            <person name="Bono H."/>
            <person name="Chalk A.M."/>
            <person name="Chiu K.P."/>
            <person name="Choudhary V."/>
            <person name="Christoffels A."/>
            <person name="Clutterbuck D.R."/>
            <person name="Crowe M.L."/>
            <person name="Dalla E."/>
            <person name="Dalrymple B.P."/>
            <person name="de Bono B."/>
            <person name="Della Gatta G."/>
            <person name="di Bernardo D."/>
            <person name="Down T."/>
            <person name="Engstrom P."/>
            <person name="Fagiolini M."/>
            <person name="Faulkner G."/>
            <person name="Fletcher C.F."/>
            <person name="Fukushima T."/>
            <person name="Furuno M."/>
            <person name="Futaki S."/>
            <person name="Gariboldi M."/>
            <person name="Georgii-Hemming P."/>
            <person name="Gingeras T.R."/>
            <person name="Gojobori T."/>
            <person name="Green R.E."/>
            <person name="Gustincich S."/>
            <person name="Harbers M."/>
            <person name="Hayashi Y."/>
            <person name="Hensch T.K."/>
            <person name="Hirokawa N."/>
            <person name="Hill D."/>
            <person name="Huminiecki L."/>
            <person name="Iacono M."/>
            <person name="Ikeo K."/>
            <person name="Iwama A."/>
            <person name="Ishikawa T."/>
            <person name="Jakt M."/>
            <person name="Kanapin A."/>
            <person name="Katoh M."/>
            <person name="Kawasawa Y."/>
            <person name="Kelso J."/>
            <person name="Kitamura H."/>
            <person name="Kitano H."/>
            <person name="Kollias G."/>
            <person name="Krishnan S.P."/>
            <person name="Kruger A."/>
            <person name="Kummerfeld S.K."/>
            <person name="Kurochkin I.V."/>
            <person name="Lareau L.F."/>
            <person name="Lazarevic D."/>
            <person name="Lipovich L."/>
            <person name="Liu J."/>
            <person name="Liuni S."/>
            <person name="McWilliam S."/>
            <person name="Madan Babu M."/>
            <person name="Madera M."/>
            <person name="Marchionni L."/>
            <person name="Matsuda H."/>
            <person name="Matsuzawa S."/>
            <person name="Miki H."/>
            <person name="Mignone F."/>
            <person name="Miyake S."/>
            <person name="Morris K."/>
            <person name="Mottagui-Tabar S."/>
            <person name="Mulder N."/>
            <person name="Nakano N."/>
            <person name="Nakauchi H."/>
            <person name="Ng P."/>
            <person name="Nilsson R."/>
            <person name="Nishiguchi S."/>
            <person name="Nishikawa S."/>
            <person name="Nori F."/>
            <person name="Ohara O."/>
            <person name="Okazaki Y."/>
            <person name="Orlando V."/>
            <person name="Pang K.C."/>
            <person name="Pavan W.J."/>
            <person name="Pavesi G."/>
            <person name="Pesole G."/>
            <person name="Petrovsky N."/>
            <person name="Piazza S."/>
            <person name="Reed J."/>
            <person name="Reid J.F."/>
            <person name="Ring B.Z."/>
            <person name="Ringwald M."/>
            <person name="Rost B."/>
            <person name="Ruan Y."/>
            <person name="Salzberg S.L."/>
            <person name="Sandelin A."/>
            <person name="Schneider C."/>
            <person name="Schoenbach C."/>
            <person name="Sekiguchi K."/>
            <person name="Semple C.A."/>
            <person name="Seno S."/>
            <person name="Sessa L."/>
            <person name="Sheng Y."/>
            <person name="Shibata Y."/>
            <person name="Shimada H."/>
            <person name="Shimada K."/>
            <person name="Silva D."/>
            <person name="Sinclair B."/>
            <person name="Sperling S."/>
            <person name="Stupka E."/>
            <person name="Sugiura K."/>
            <person name="Sultana R."/>
            <person name="Takenaka Y."/>
            <person name="Taki K."/>
            <person name="Tammoja K."/>
            <person name="Tan S.L."/>
            <person name="Tang S."/>
            <person name="Taylor M.S."/>
            <person name="Tegner J."/>
            <person name="Teichmann S.A."/>
            <person name="Ueda H.R."/>
            <person name="van Nimwegen E."/>
            <person name="Verardo R."/>
            <person name="Wei C.L."/>
            <person name="Yagi K."/>
            <person name="Yamanishi H."/>
            <person name="Zabarovsky E."/>
            <person name="Zhu S."/>
            <person name="Zimmer A."/>
            <person name="Hide W."/>
            <person name="Bult C."/>
            <person name="Grimmond S.M."/>
            <person name="Teasdale R.D."/>
            <person name="Liu E.T."/>
            <person name="Brusic V."/>
            <person name="Quackenbush J."/>
            <person name="Wahlestedt C."/>
            <person name="Mattick J.S."/>
            <person name="Hume D.A."/>
            <person name="Kai C."/>
            <person name="Sasaki D."/>
            <person name="Tomaru Y."/>
            <person name="Fukuda S."/>
            <person name="Kanamori-Katayama M."/>
            <person name="Suzuki M."/>
            <person name="Aoki J."/>
            <person name="Arakawa T."/>
            <person name="Iida J."/>
            <person name="Imamura K."/>
            <person name="Itoh M."/>
            <person name="Kato T."/>
            <person name="Kawaji H."/>
            <person name="Kawagashira N."/>
            <person name="Kawashima T."/>
            <person name="Kojima M."/>
            <person name="Kondo S."/>
            <person name="Konno H."/>
            <person name="Nakano K."/>
            <person name="Ninomiya N."/>
            <person name="Nishio T."/>
            <person name="Okada M."/>
            <person name="Plessy C."/>
            <person name="Shibata K."/>
            <person name="Shiraki T."/>
            <person name="Suzuki S."/>
            <person name="Tagami M."/>
            <person name="Waki K."/>
            <person name="Watahiki A."/>
            <person name="Okamura-Oho Y."/>
            <person name="Suzuki H."/>
            <person name="Kawai J."/>
            <person name="Hayashizaki Y."/>
        </authorList>
    </citation>
    <scope>NUCLEOTIDE SEQUENCE [LARGE SCALE MRNA]</scope>
    <source>
        <strain>C57BL/6J</strain>
        <tissue>Pancreas</tissue>
        <tissue>Skin</tissue>
        <tissue>Testis</tissue>
    </source>
</reference>
<reference key="4">
    <citation type="journal article" date="2004" name="Genome Res.">
        <title>The status, quality, and expansion of the NIH full-length cDNA project: the Mammalian Gene Collection (MGC).</title>
        <authorList>
            <consortium name="The MGC Project Team"/>
        </authorList>
    </citation>
    <scope>NUCLEOTIDE SEQUENCE [LARGE SCALE MRNA]</scope>
    <source>
        <strain>FVB/N</strain>
        <tissue>Kidney</tissue>
    </source>
</reference>
<reference key="5">
    <citation type="journal article" date="2003" name="DNA Res.">
        <title>Prediction of the coding sequences of mouse homologues of KIAA gene: III. The complete nucleotide sequences of 500 mouse KIAA-homologous cDNAs identified by screening of terminal sequences of cDNA clones randomly sampled from size-fractionated libraries.</title>
        <authorList>
            <person name="Okazaki N."/>
            <person name="Kikuno R."/>
            <person name="Ohara R."/>
            <person name="Inamoto S."/>
            <person name="Koseki H."/>
            <person name="Hiraoka S."/>
            <person name="Saga Y."/>
            <person name="Nagase T."/>
            <person name="Ohara O."/>
            <person name="Koga H."/>
        </authorList>
    </citation>
    <scope>NUCLEOTIDE SEQUENCE [LARGE SCALE MRNA] OF 128-393</scope>
    <source>
        <tissue>Brain</tissue>
    </source>
</reference>
<reference key="6">
    <citation type="journal article" date="2003" name="J. Biol. Chem.">
        <title>A single protease, Apg4B, is specific for the autophagy-related ubiquitin-like proteins GATE-16, MAP1-LC3, GABARAP, and Apg8L.</title>
        <authorList>
            <person name="Hemelaar J."/>
            <person name="Lelyveld V.S."/>
            <person name="Kessler B.M."/>
            <person name="Ploegh H.L."/>
        </authorList>
    </citation>
    <scope>FUNCTION</scope>
    <scope>SUBCELLULAR LOCATION</scope>
</reference>
<reference key="7">
    <citation type="journal article" date="2010" name="Cell">
        <title>A tissue-specific atlas of mouse protein phosphorylation and expression.</title>
        <authorList>
            <person name="Huttlin E.L."/>
            <person name="Jedrychowski M.P."/>
            <person name="Elias J.E."/>
            <person name="Goswami T."/>
            <person name="Rad R."/>
            <person name="Beausoleil S.A."/>
            <person name="Villen J."/>
            <person name="Haas W."/>
            <person name="Sowa M.E."/>
            <person name="Gygi S.P."/>
        </authorList>
    </citation>
    <scope>IDENTIFICATION BY MASS SPECTROMETRY [LARGE SCALE ANALYSIS]</scope>
    <source>
        <tissue>Brain</tissue>
        <tissue>Brown adipose tissue</tissue>
        <tissue>Heart</tissue>
        <tissue>Kidney</tissue>
        <tissue>Lung</tissue>
        <tissue>Pancreas</tissue>
        <tissue>Spleen</tissue>
        <tissue>Testis</tissue>
    </source>
</reference>
<reference key="8">
    <citation type="journal article" date="2010" name="J. Clin. Invest.">
        <title>Autophagy is essential for mouse sense of balance.</title>
        <authorList>
            <person name="Marino G."/>
            <person name="Fernandez A.F."/>
            <person name="Cabrera S."/>
            <person name="Lundberg Y.W."/>
            <person name="Cabanillas R."/>
            <person name="Rodriguez F."/>
            <person name="Salvador-Montoliu N."/>
            <person name="Vega J.A."/>
            <person name="Germana A."/>
            <person name="Fueyo A."/>
            <person name="Freije J.M."/>
            <person name="Lopez-Otin C."/>
        </authorList>
    </citation>
    <scope>FUNCTION</scope>
    <scope>DISRUPTION PHENOTYPE</scope>
</reference>
<reference key="9">
    <citation type="journal article" date="2011" name="Science">
        <title>A family of IFN-gamma-inducible 65-kD GTPases protects against bacterial infection.</title>
        <authorList>
            <person name="Kim B.H."/>
            <person name="Shenoy A.R."/>
            <person name="Kumar P."/>
            <person name="Das R."/>
            <person name="Tiwari S."/>
            <person name="MacMicking J.D."/>
        </authorList>
    </citation>
    <scope>INTERACTION WITH GBP7</scope>
</reference>
<reference key="10">
    <citation type="journal article" date="2011" name="Vet. Pathol.">
        <title>Histopathological and neurological features of Atg4b knockout mice.</title>
        <authorList>
            <person name="Read R."/>
            <person name="Savelieva K."/>
            <person name="Baker K."/>
            <person name="Hansen G."/>
            <person name="Vogel P."/>
        </authorList>
    </citation>
    <scope>DISRUPTION PHENOTYPE</scope>
</reference>
<reference key="11">
    <citation type="journal article" date="2012" name="PLoS Genet.">
        <title>Regulation of ATG4B stability by RNF5 limits basal levels of autophagy and influences susceptibility to bacterial infection.</title>
        <authorList>
            <person name="Kuang E."/>
            <person name="Okumura C.Y."/>
            <person name="Sheffy-Levin S."/>
            <person name="Varsano T."/>
            <person name="Shu V.C."/>
            <person name="Qi J."/>
            <person name="Niesman I.R."/>
            <person name="Yang H.J."/>
            <person name="Lopez-Otin C."/>
            <person name="Yang W.Y."/>
            <person name="Reed J.C."/>
            <person name="Broday L."/>
            <person name="Nizet V."/>
            <person name="Ronai Z.A."/>
        </authorList>
    </citation>
    <scope>UBIQUITINATION</scope>
</reference>
<reference key="12">
    <citation type="journal article" date="2018" name="Autophagy">
        <title>Delipidation of mammalian Atg8-family proteins by each of the four ATG4 proteases.</title>
        <authorList>
            <person name="Kauffman K.J."/>
            <person name="Yu S."/>
            <person name="Jin J."/>
            <person name="Mugo B."/>
            <person name="Nguyen N."/>
            <person name="O'Brien A."/>
            <person name="Nag S."/>
            <person name="Lystad A.H."/>
            <person name="Melia T.J."/>
        </authorList>
    </citation>
    <scope>FUNCTION</scope>
</reference>
<gene>
    <name evidence="11 14" type="primary">Atg4b</name>
    <name evidence="9" type="synonym">Apg4b</name>
    <name type="synonym">Autl1</name>
    <name evidence="10" type="synonym">Kiaa0943</name>
</gene>
<proteinExistence type="evidence at protein level"/>
<name>ATG4B_MOUSE</name>
<comment type="function">
    <text evidence="1 2 3 7">Cysteine protease that plays a key role in autophagy by mediating both proteolytic activation and delipidation of ATG8 family proteins (PubMed:14530254, PubMed:20577052, PubMed:29458288). Required for canonical autophagy (macroautophagy), non-canonical autophagy as well as for mitophagy (By similarity). The protease activity is required for proteolytic activation of ATG8 family proteins: cleaves the C-terminal amino acid of ATG8 proteins MAP1LC3A, MAP1LC3B, MAP1LC3C, GABARAPL1, GABARAPL2 and GABARAP, to reveal a C-terminal glycine (PubMed:14530254, PubMed:29458288). Exposure of the glycine at the C-terminus is essential for ATG8 proteins conjugation to phosphatidylethanolamine (PE) and insertion to membranes, which is necessary for autophagy (PubMed:14530254, PubMed:29458288). Protease activity is also required to counteract formation of high-molecular weight conjugates of ATG8 proteins (ATG8ylation): acts as a deubiquitinating-like enzyme that removes ATG8 conjugated to other proteins, such as ATG3 (By similarity). In addition to the protease activity, also mediates delipidation of ATG8 family proteins (PubMed:29458288). Catalyzes delipidation of PE-conjugated forms of ATG8 proteins during macroautophagy (By similarity). Also involved in non-canonical autophagy, a parallel pathway involving conjugation of ATG8 proteins to single membranes at endolysosomal compartments, by catalyzing delipidation of ATG8 proteins conjugated to phosphatidylserine (PS) (By similarity). Compared to other members of the family (ATG4A, ATG4C or ATG4C), constitutes the major protein for proteolytic activation of ATG8 proteins, while it displays weaker delipidation activity than other ATG4 paralogs (PubMed:29458288). Involved in phagophore growth during mitophagy independently of its protease activity and of ATG8 proteins: acts by regulating ATG9A trafficking to mitochondria and promoting phagophore-endoplasmic reticulum contacts during the lipid transfer phase of mitophagy (By similarity).</text>
</comment>
<comment type="catalytic activity">
    <reaction evidence="1">
        <text>[protein]-C-terminal L-amino acid-glycyl-phosphatidylethanolamide + H2O = [protein]-C-terminal L-amino acid-glycine + a 1,2-diacyl-sn-glycero-3-phosphoethanolamine</text>
        <dbReference type="Rhea" id="RHEA:67548"/>
        <dbReference type="Rhea" id="RHEA-COMP:17323"/>
        <dbReference type="Rhea" id="RHEA-COMP:17324"/>
        <dbReference type="ChEBI" id="CHEBI:15377"/>
        <dbReference type="ChEBI" id="CHEBI:64612"/>
        <dbReference type="ChEBI" id="CHEBI:172940"/>
        <dbReference type="ChEBI" id="CHEBI:172941"/>
    </reaction>
    <physiologicalReaction direction="left-to-right" evidence="1">
        <dbReference type="Rhea" id="RHEA:67549"/>
    </physiologicalReaction>
</comment>
<comment type="catalytic activity">
    <reaction evidence="1">
        <text>[protein]-C-terminal L-amino acid-glycyl-phosphatidylserine + H2O = [protein]-C-terminal L-amino acid-glycine + a 1,2-diacyl-sn-glycero-3-phospho-L-serine</text>
        <dbReference type="Rhea" id="RHEA:67576"/>
        <dbReference type="Rhea" id="RHEA-COMP:17324"/>
        <dbReference type="Rhea" id="RHEA-COMP:17326"/>
        <dbReference type="ChEBI" id="CHEBI:15377"/>
        <dbReference type="ChEBI" id="CHEBI:57262"/>
        <dbReference type="ChEBI" id="CHEBI:172940"/>
        <dbReference type="ChEBI" id="CHEBI:172942"/>
    </reaction>
    <physiologicalReaction direction="left-to-right" evidence="1">
        <dbReference type="Rhea" id="RHEA:67577"/>
    </physiologicalReaction>
</comment>
<comment type="activity regulation">
    <text evidence="1">Inhibited by N-ethylmaleimide. Redox-regulated during autophagy since reducing conditions activate ATG4A whereas an oxidizing environment such as the presence of H(2)O(2) inhibits its activity. The cysteine protease activity compounds is inhibited by styrylquinoline compounds 4-28 and LV-320.</text>
</comment>
<comment type="subunit">
    <text evidence="1 5">Interacts with PFKP; promoting phosphorylation of ATG4B at Ser-34 (By similarity). Interacts with GBP7 (PubMed:21551061).</text>
</comment>
<comment type="subcellular location">
    <subcellularLocation>
        <location evidence="2">Cytoplasm</location>
    </subcellularLocation>
    <subcellularLocation>
        <location evidence="1">Cytoplasm</location>
        <location evidence="1">Cytosol</location>
    </subcellularLocation>
    <subcellularLocation>
        <location evidence="1">Cytoplasmic vesicle</location>
        <location evidence="1">Autophagosome</location>
    </subcellularLocation>
    <subcellularLocation>
        <location evidence="1">Endoplasmic reticulum</location>
    </subcellularLocation>
    <subcellularLocation>
        <location evidence="1">Mitochondrion</location>
    </subcellularLocation>
    <text evidence="1">Mainly localizes to the cytoplasm, including cytosol. A samll potion localizes to mitochondria; phosphorylation at Ser-34 promotes localization to mitochondria.</text>
</comment>
<comment type="domain">
    <text evidence="1">The LIR motif (LC3-interacting region) is required for the interaction with ATG8 family proteins MAP1LC3A, MAP1LC3B, MAP1LC3C and GABARAPL1. Required for proteolytic activation and delipidation of ATG8 proteins.</text>
</comment>
<comment type="PTM">
    <text evidence="1">Phosphorylation at Ser-383 and Ser-392 promotes autophagy by increasing protein delipidation activity without affecting proteolytic activation of ATG8 proteins. Phosphorylation at Ser-316 by ULK1 inhibits autophagy by decreasing both proteolytic activation and delipidation activities. Phosphorylation at Ser-316 is dephosphorylated by protein phosphatase 2A (PP2A). Phosphorylation at Ser-34 by AKT2 promotes its hydrolase activity, leading to increased proteolytic activation and delipidation of ATG8 family proteins. Phosphorylation at Ser-34 by AKT1 promotes mitochondrial localization and inhibition of the F1F0-ATP synthase activity, leading to elevation of mitochondrial reactive oxygen species (ROS).</text>
</comment>
<comment type="PTM">
    <text evidence="6">Ubiquitinated by RNF5, leading to its degradation by the proteasome.</text>
</comment>
<comment type="PTM">
    <text evidence="1">S-nitrosylation at Cys-189 and Cys-292 in response to high glucose decreases both proteolytic activation and delipidation activities.</text>
</comment>
<comment type="PTM">
    <text evidence="1">O-glycosylated by OGT, leading to increase protease activity, thereby promoting the proteolytic activation of ATG8 family proteins.</text>
</comment>
<comment type="PTM">
    <text evidence="1">Forms reversible intrachain disulfide bonds in response to oxidative stress. Forms interchain disulfide bonds, leading to formation of homooligomers in response to oxidation.</text>
</comment>
<comment type="disruption phenotype">
    <text evidence="3 4">Mice develop normally but are born at a slightly lower ratio than the expected Mendelian rate (PubMed:20577052, PubMed:20634410). Cells display systemic reduction of autophagic activity, characterized by defective proteolytic processing of ATG8 family proteins, compromising the rate of autophagosome maturation (PubMed:20577052). Mice show severe balance disorders, which are caused by defects in the development of otoconia (PubMed:20577052). The central nervous system (CNS) of mutant mice also displays amorphous globular bodies in the neuropil of the deep cerebellar nuclei and adjacent vestibular nuclei (PubMed:20634410). The spheroid-like bodies in the deep cerebellar and vestibular nuclei show heterogeneous composition, characteristics of proteinaceous material (PubMed:20634410).</text>
</comment>
<comment type="similarity">
    <text evidence="13">Belongs to the peptidase C54 family.</text>
</comment>
<sequence length="393" mass="44375">MDAATLTYDTLRFAEFEDFPETSEPVWILGRKYSIFTEKDEILSDVASRLWFTYRRNFPAIGGTGPTSDTGWGCMLRCGQMIFAQALVCRHLGRDWRWTQRKRQPDSYFNVLNAFLDRKDSYYSIHQIAQMGVGEGKSIGQWYGPNTVAQVLKKLAVFDTWSSLAVHIAMDNTVVMEEIRRLCRANLPCAGAAALPTDSERHCNGFPAGAEVTNRPSAWRPLVLLIPLRLGLTDINEAYVETLKHCFMMPQSLGVIGGKPNSAHYFIGYVGEELIYLDPHTTQPAVELTDSCFIPDESFHCQHPPSRMGIGELDPSIAVGFFCKTEEDFNDWCQQVKKLSQLGGALPMFELVEQQPSHLACQDVLNLSLDSSDVERLERFFDSEDEDFEILSL</sequence>
<feature type="chain" id="PRO_0000215845" description="Cysteine protease ATG4B">
    <location>
        <begin position="1"/>
        <end position="393"/>
    </location>
</feature>
<feature type="short sequence motif" description="LIR" evidence="1">
    <location>
        <begin position="388"/>
        <end position="391"/>
    </location>
</feature>
<feature type="active site" description="Nucleophile" evidence="1">
    <location>
        <position position="74"/>
    </location>
</feature>
<feature type="active site" evidence="1">
    <location>
        <position position="278"/>
    </location>
</feature>
<feature type="active site" evidence="1">
    <location>
        <position position="280"/>
    </location>
</feature>
<feature type="modified residue" description="N-acetylmethionine" evidence="1">
    <location>
        <position position="1"/>
    </location>
</feature>
<feature type="modified residue" description="Phosphoserine" evidence="1">
    <location>
        <position position="34"/>
    </location>
</feature>
<feature type="modified residue" description="S-nitrosocysteine" evidence="1">
    <location>
        <position position="189"/>
    </location>
</feature>
<feature type="modified residue" description="S-nitrosocysteine" evidence="1">
    <location>
        <position position="292"/>
    </location>
</feature>
<feature type="modified residue" description="S-nitrosocysteine" evidence="1">
    <location>
        <position position="301"/>
    </location>
</feature>
<feature type="modified residue" description="Phosphoserine" evidence="1">
    <location>
        <position position="316"/>
    </location>
</feature>
<feature type="modified residue" description="Phosphoserine" evidence="1">
    <location>
        <position position="383"/>
    </location>
</feature>
<feature type="modified residue" description="Phosphoserine" evidence="1">
    <location>
        <position position="392"/>
    </location>
</feature>
<feature type="disulfide bond" evidence="1">
    <location>
        <begin position="292"/>
        <end position="361"/>
    </location>
</feature>
<feature type="disulfide bond" description="Interchain (with C-361)" evidence="1">
    <location>
        <position position="292"/>
    </location>
</feature>
<feature type="disulfide bond" description="Interchain (with C-292)" evidence="1">
    <location>
        <position position="361"/>
    </location>
</feature>
<feature type="sequence conflict" description="In Ref. 4; AAH27184." evidence="13" ref="4">
    <original>IAQMGVGEGKSIGQWYGPNTVAQVLK</original>
    <variation>NCLNCHCCGVMLMLYKAHGSVLAFCR</variation>
    <location>
        <begin position="128"/>
        <end position="153"/>
    </location>
</feature>
<feature type="sequence conflict" description="In Ref. 1; CAD43220 and 3; BAC26079/BAC27455/BAC35965." evidence="13" ref="1 3">
    <original>A</original>
    <variation>V</variation>
    <location>
        <position position="190"/>
    </location>
</feature>
<feature type="sequence conflict" description="In Ref. 3; BAC40587, 4 and 5." evidence="13" ref="3 4 5">
    <original>T</original>
    <variation>K</variation>
    <location>
        <position position="325"/>
    </location>
</feature>
<evidence type="ECO:0000250" key="1">
    <source>
        <dbReference type="UniProtKB" id="Q9Y4P1"/>
    </source>
</evidence>
<evidence type="ECO:0000269" key="2">
    <source>
    </source>
</evidence>
<evidence type="ECO:0000269" key="3">
    <source>
    </source>
</evidence>
<evidence type="ECO:0000269" key="4">
    <source>
    </source>
</evidence>
<evidence type="ECO:0000269" key="5">
    <source>
    </source>
</evidence>
<evidence type="ECO:0000269" key="6">
    <source>
    </source>
</evidence>
<evidence type="ECO:0000269" key="7">
    <source>
    </source>
</evidence>
<evidence type="ECO:0000303" key="8">
    <source>
    </source>
</evidence>
<evidence type="ECO:0000303" key="9">
    <source>
    </source>
</evidence>
<evidence type="ECO:0000303" key="10">
    <source>
    </source>
</evidence>
<evidence type="ECO:0000303" key="11">
    <source>
    </source>
</evidence>
<evidence type="ECO:0000303" key="12">
    <source>
    </source>
</evidence>
<evidence type="ECO:0000305" key="13"/>
<evidence type="ECO:0000312" key="14">
    <source>
        <dbReference type="MGI" id="MGI:1913865"/>
    </source>
</evidence>
<dbReference type="EC" id="3.4.22.-" evidence="2 7"/>
<dbReference type="EMBL" id="AJ504653">
    <property type="protein sequence ID" value="CAD43220.1"/>
    <property type="molecule type" value="mRNA"/>
</dbReference>
<dbReference type="EMBL" id="AK028712">
    <property type="protein sequence ID" value="BAC26079.1"/>
    <property type="molecule type" value="mRNA"/>
</dbReference>
<dbReference type="EMBL" id="AK031570">
    <property type="protein sequence ID" value="BAC27455.1"/>
    <property type="molecule type" value="mRNA"/>
</dbReference>
<dbReference type="EMBL" id="AK075796">
    <property type="protein sequence ID" value="BAC35965.1"/>
    <property type="molecule type" value="mRNA"/>
</dbReference>
<dbReference type="EMBL" id="AK088811">
    <property type="protein sequence ID" value="BAC40587.1"/>
    <property type="molecule type" value="mRNA"/>
</dbReference>
<dbReference type="EMBL" id="BC027184">
    <property type="protein sequence ID" value="AAH27184.1"/>
    <property type="molecule type" value="mRNA"/>
</dbReference>
<dbReference type="EMBL" id="AK129242">
    <property type="protein sequence ID" value="BAC98052.1"/>
    <property type="molecule type" value="mRNA"/>
</dbReference>
<dbReference type="CCDS" id="CCDS15195.1"/>
<dbReference type="RefSeq" id="NP_777363.1">
    <property type="nucleotide sequence ID" value="NM_174874.3"/>
</dbReference>
<dbReference type="SMR" id="Q8BGE6"/>
<dbReference type="BioGRID" id="211597">
    <property type="interactions" value="21"/>
</dbReference>
<dbReference type="FunCoup" id="Q8BGE6">
    <property type="interactions" value="1870"/>
</dbReference>
<dbReference type="STRING" id="10090.ENSMUSP00000027502"/>
<dbReference type="MEROPS" id="C54.003"/>
<dbReference type="GlyGen" id="Q8BGE6">
    <property type="glycosylation" value="2 sites, 1 O-linked glycan (1 site)"/>
</dbReference>
<dbReference type="iPTMnet" id="Q8BGE6"/>
<dbReference type="PhosphoSitePlus" id="Q8BGE6"/>
<dbReference type="jPOST" id="Q8BGE6"/>
<dbReference type="PaxDb" id="10090-ENSMUSP00000027502"/>
<dbReference type="PeptideAtlas" id="Q8BGE6"/>
<dbReference type="ProteomicsDB" id="265147"/>
<dbReference type="Pumba" id="Q8BGE6"/>
<dbReference type="DNASU" id="66615"/>
<dbReference type="GeneID" id="66615"/>
<dbReference type="KEGG" id="mmu:66615"/>
<dbReference type="UCSC" id="uc007cej.1">
    <property type="organism name" value="mouse"/>
</dbReference>
<dbReference type="AGR" id="MGI:1913865"/>
<dbReference type="CTD" id="23192"/>
<dbReference type="MGI" id="MGI:1913865">
    <property type="gene designation" value="Atg4b"/>
</dbReference>
<dbReference type="eggNOG" id="KOG2674">
    <property type="taxonomic scope" value="Eukaryota"/>
</dbReference>
<dbReference type="InParanoid" id="Q8BGE6"/>
<dbReference type="OrthoDB" id="2960936at2759"/>
<dbReference type="PhylomeDB" id="Q8BGE6"/>
<dbReference type="TreeFam" id="TF314847"/>
<dbReference type="Reactome" id="R-MMU-1632852">
    <property type="pathway name" value="Macroautophagy"/>
</dbReference>
<dbReference type="BioGRID-ORCS" id="66615">
    <property type="hits" value="8 hits in 82 CRISPR screens"/>
</dbReference>
<dbReference type="ChiTaRS" id="Atg4b">
    <property type="organism name" value="mouse"/>
</dbReference>
<dbReference type="PRO" id="PR:Q8BGE6"/>
<dbReference type="Proteomes" id="UP000000589">
    <property type="component" value="Unplaced"/>
</dbReference>
<dbReference type="RNAct" id="Q8BGE6">
    <property type="molecule type" value="protein"/>
</dbReference>
<dbReference type="GO" id="GO:0005776">
    <property type="term" value="C:autophagosome"/>
    <property type="evidence" value="ECO:0007669"/>
    <property type="project" value="UniProtKB-SubCell"/>
</dbReference>
<dbReference type="GO" id="GO:0005737">
    <property type="term" value="C:cytoplasm"/>
    <property type="evidence" value="ECO:0000314"/>
    <property type="project" value="UniProtKB"/>
</dbReference>
<dbReference type="GO" id="GO:0031410">
    <property type="term" value="C:cytoplasmic vesicle"/>
    <property type="evidence" value="ECO:0007669"/>
    <property type="project" value="UniProtKB-KW"/>
</dbReference>
<dbReference type="GO" id="GO:0005829">
    <property type="term" value="C:cytosol"/>
    <property type="evidence" value="ECO:0007669"/>
    <property type="project" value="UniProtKB-SubCell"/>
</dbReference>
<dbReference type="GO" id="GO:0005783">
    <property type="term" value="C:endoplasmic reticulum"/>
    <property type="evidence" value="ECO:0007669"/>
    <property type="project" value="UniProtKB-SubCell"/>
</dbReference>
<dbReference type="GO" id="GO:0005739">
    <property type="term" value="C:mitochondrion"/>
    <property type="evidence" value="ECO:0007669"/>
    <property type="project" value="UniProtKB-SubCell"/>
</dbReference>
<dbReference type="GO" id="GO:0008234">
    <property type="term" value="F:cysteine-type peptidase activity"/>
    <property type="evidence" value="ECO:0000314"/>
    <property type="project" value="UniProtKB"/>
</dbReference>
<dbReference type="GO" id="GO:0008233">
    <property type="term" value="F:peptidase activity"/>
    <property type="evidence" value="ECO:0000314"/>
    <property type="project" value="UniProtKB"/>
</dbReference>
<dbReference type="GO" id="GO:0019786">
    <property type="term" value="F:protein-phosphatidylethanolamide deconjugating activity"/>
    <property type="evidence" value="ECO:0007669"/>
    <property type="project" value="InterPro"/>
</dbReference>
<dbReference type="GO" id="GO:0000045">
    <property type="term" value="P:autophagosome assembly"/>
    <property type="evidence" value="ECO:0000315"/>
    <property type="project" value="ParkinsonsUK-UCL"/>
</dbReference>
<dbReference type="GO" id="GO:0006914">
    <property type="term" value="P:autophagy"/>
    <property type="evidence" value="ECO:0000315"/>
    <property type="project" value="UniProtKB"/>
</dbReference>
<dbReference type="GO" id="GO:0009267">
    <property type="term" value="P:cellular response to starvation"/>
    <property type="evidence" value="ECO:0000315"/>
    <property type="project" value="ParkinsonsUK-UCL"/>
</dbReference>
<dbReference type="GO" id="GO:0016237">
    <property type="term" value="P:microautophagy"/>
    <property type="evidence" value="ECO:0000250"/>
    <property type="project" value="UniProtKB"/>
</dbReference>
<dbReference type="GO" id="GO:0000423">
    <property type="term" value="P:mitophagy"/>
    <property type="evidence" value="ECO:0000250"/>
    <property type="project" value="UniProtKB"/>
</dbReference>
<dbReference type="GO" id="GO:0031173">
    <property type="term" value="P:otolith mineralization completed early in development"/>
    <property type="evidence" value="ECO:0000315"/>
    <property type="project" value="UniProtKB"/>
</dbReference>
<dbReference type="GO" id="GO:0051697">
    <property type="term" value="P:protein delipidation"/>
    <property type="evidence" value="ECO:0000314"/>
    <property type="project" value="UniProtKB"/>
</dbReference>
<dbReference type="GO" id="GO:0015031">
    <property type="term" value="P:protein transport"/>
    <property type="evidence" value="ECO:0007669"/>
    <property type="project" value="UniProtKB-KW"/>
</dbReference>
<dbReference type="GO" id="GO:0006508">
    <property type="term" value="P:proteolysis"/>
    <property type="evidence" value="ECO:0007669"/>
    <property type="project" value="UniProtKB-KW"/>
</dbReference>
<dbReference type="InterPro" id="IPR046793">
    <property type="entry name" value="ATG4_LIR"/>
</dbReference>
<dbReference type="InterPro" id="IPR038765">
    <property type="entry name" value="Papain-like_cys_pep_sf"/>
</dbReference>
<dbReference type="InterPro" id="IPR005078">
    <property type="entry name" value="Peptidase_C54"/>
</dbReference>
<dbReference type="InterPro" id="IPR046792">
    <property type="entry name" value="Peptidase_C54_cat"/>
</dbReference>
<dbReference type="PANTHER" id="PTHR22624">
    <property type="entry name" value="CYSTEINE PROTEASE ATG4"/>
    <property type="match status" value="1"/>
</dbReference>
<dbReference type="PANTHER" id="PTHR22624:SF39">
    <property type="entry name" value="CYSTEINE PROTEASE ATG4B"/>
    <property type="match status" value="1"/>
</dbReference>
<dbReference type="Pfam" id="PF20166">
    <property type="entry name" value="ATG4_LIR"/>
    <property type="match status" value="1"/>
</dbReference>
<dbReference type="Pfam" id="PF03416">
    <property type="entry name" value="Peptidase_C54"/>
    <property type="match status" value="1"/>
</dbReference>
<dbReference type="SUPFAM" id="SSF54001">
    <property type="entry name" value="Cysteine proteinases"/>
    <property type="match status" value="1"/>
</dbReference>
<keyword id="KW-0007">Acetylation</keyword>
<keyword id="KW-0072">Autophagy</keyword>
<keyword id="KW-0963">Cytoplasm</keyword>
<keyword id="KW-0968">Cytoplasmic vesicle</keyword>
<keyword id="KW-1015">Disulfide bond</keyword>
<keyword id="KW-0256">Endoplasmic reticulum</keyword>
<keyword id="KW-0325">Glycoprotein</keyword>
<keyword id="KW-0378">Hydrolase</keyword>
<keyword id="KW-1017">Isopeptide bond</keyword>
<keyword id="KW-0496">Mitochondrion</keyword>
<keyword id="KW-0597">Phosphoprotein</keyword>
<keyword id="KW-0645">Protease</keyword>
<keyword id="KW-0653">Protein transport</keyword>
<keyword id="KW-1185">Reference proteome</keyword>
<keyword id="KW-0702">S-nitrosylation</keyword>
<keyword id="KW-0788">Thiol protease</keyword>
<keyword id="KW-0813">Transport</keyword>
<keyword id="KW-0832">Ubl conjugation</keyword>
<keyword id="KW-0833">Ubl conjugation pathway</keyword>
<organism>
    <name type="scientific">Mus musculus</name>
    <name type="common">Mouse</name>
    <dbReference type="NCBI Taxonomy" id="10090"/>
    <lineage>
        <taxon>Eukaryota</taxon>
        <taxon>Metazoa</taxon>
        <taxon>Chordata</taxon>
        <taxon>Craniata</taxon>
        <taxon>Vertebrata</taxon>
        <taxon>Euteleostomi</taxon>
        <taxon>Mammalia</taxon>
        <taxon>Eutheria</taxon>
        <taxon>Euarchontoglires</taxon>
        <taxon>Glires</taxon>
        <taxon>Rodentia</taxon>
        <taxon>Myomorpha</taxon>
        <taxon>Muroidea</taxon>
        <taxon>Muridae</taxon>
        <taxon>Murinae</taxon>
        <taxon>Mus</taxon>
        <taxon>Mus</taxon>
    </lineage>
</organism>
<protein>
    <recommendedName>
        <fullName evidence="13">Cysteine protease ATG4B</fullName>
        <ecNumber evidence="2 7">3.4.22.-</ecNumber>
    </recommendedName>
    <alternativeName>
        <fullName>AUT-like 1 cysteine endopeptidase</fullName>
    </alternativeName>
    <alternativeName>
        <fullName evidence="8">Autophagy-related cysteine endopeptidase 1</fullName>
        <shortName evidence="8">Autophagin-1</shortName>
    </alternativeName>
    <alternativeName>
        <fullName evidence="9">Autophagy-related protein 4 homolog B</fullName>
        <shortName evidence="12">MmAPG4B</shortName>
    </alternativeName>
</protein>